<dbReference type="EC" id="3.6.1.27" evidence="1"/>
<dbReference type="EMBL" id="CP000113">
    <property type="protein sequence ID" value="ABF89199.1"/>
    <property type="molecule type" value="Genomic_DNA"/>
</dbReference>
<dbReference type="RefSeq" id="WP_011556445.1">
    <property type="nucleotide sequence ID" value="NC_008095.1"/>
</dbReference>
<dbReference type="SMR" id="Q1CY86"/>
<dbReference type="STRING" id="246197.MXAN_6514"/>
<dbReference type="EnsemblBacteria" id="ABF89199">
    <property type="protein sequence ID" value="ABF89199"/>
    <property type="gene ID" value="MXAN_6514"/>
</dbReference>
<dbReference type="GeneID" id="41363722"/>
<dbReference type="KEGG" id="mxa:MXAN_6514"/>
<dbReference type="eggNOG" id="COG1968">
    <property type="taxonomic scope" value="Bacteria"/>
</dbReference>
<dbReference type="HOGENOM" id="CLU_060296_1_0_7"/>
<dbReference type="OrthoDB" id="9808289at2"/>
<dbReference type="Proteomes" id="UP000002402">
    <property type="component" value="Chromosome"/>
</dbReference>
<dbReference type="GO" id="GO:0005886">
    <property type="term" value="C:plasma membrane"/>
    <property type="evidence" value="ECO:0007669"/>
    <property type="project" value="UniProtKB-SubCell"/>
</dbReference>
<dbReference type="GO" id="GO:0050380">
    <property type="term" value="F:undecaprenyl-diphosphatase activity"/>
    <property type="evidence" value="ECO:0007669"/>
    <property type="project" value="UniProtKB-UniRule"/>
</dbReference>
<dbReference type="GO" id="GO:0071555">
    <property type="term" value="P:cell wall organization"/>
    <property type="evidence" value="ECO:0007669"/>
    <property type="project" value="UniProtKB-KW"/>
</dbReference>
<dbReference type="GO" id="GO:0009252">
    <property type="term" value="P:peptidoglycan biosynthetic process"/>
    <property type="evidence" value="ECO:0007669"/>
    <property type="project" value="UniProtKB-KW"/>
</dbReference>
<dbReference type="GO" id="GO:0008360">
    <property type="term" value="P:regulation of cell shape"/>
    <property type="evidence" value="ECO:0007669"/>
    <property type="project" value="UniProtKB-KW"/>
</dbReference>
<dbReference type="GO" id="GO:0046677">
    <property type="term" value="P:response to antibiotic"/>
    <property type="evidence" value="ECO:0007669"/>
    <property type="project" value="UniProtKB-UniRule"/>
</dbReference>
<dbReference type="HAMAP" id="MF_01006">
    <property type="entry name" value="Undec_diphosphatase"/>
    <property type="match status" value="1"/>
</dbReference>
<dbReference type="InterPro" id="IPR003824">
    <property type="entry name" value="UppP"/>
</dbReference>
<dbReference type="NCBIfam" id="NF001392">
    <property type="entry name" value="PRK00281.2-1"/>
    <property type="match status" value="1"/>
</dbReference>
<dbReference type="NCBIfam" id="NF001393">
    <property type="entry name" value="PRK00281.2-4"/>
    <property type="match status" value="1"/>
</dbReference>
<dbReference type="NCBIfam" id="NF001394">
    <property type="entry name" value="PRK00281.2-5"/>
    <property type="match status" value="1"/>
</dbReference>
<dbReference type="NCBIfam" id="TIGR00753">
    <property type="entry name" value="undec_PP_bacA"/>
    <property type="match status" value="1"/>
</dbReference>
<dbReference type="PANTHER" id="PTHR30622">
    <property type="entry name" value="UNDECAPRENYL-DIPHOSPHATASE"/>
    <property type="match status" value="1"/>
</dbReference>
<dbReference type="PANTHER" id="PTHR30622:SF4">
    <property type="entry name" value="UNDECAPRENYL-DIPHOSPHATASE"/>
    <property type="match status" value="1"/>
</dbReference>
<dbReference type="Pfam" id="PF02673">
    <property type="entry name" value="BacA"/>
    <property type="match status" value="1"/>
</dbReference>
<organism>
    <name type="scientific">Myxococcus xanthus (strain DK1622)</name>
    <dbReference type="NCBI Taxonomy" id="246197"/>
    <lineage>
        <taxon>Bacteria</taxon>
        <taxon>Pseudomonadati</taxon>
        <taxon>Myxococcota</taxon>
        <taxon>Myxococcia</taxon>
        <taxon>Myxococcales</taxon>
        <taxon>Cystobacterineae</taxon>
        <taxon>Myxococcaceae</taxon>
        <taxon>Myxococcus</taxon>
    </lineage>
</organism>
<gene>
    <name evidence="1" type="primary">uppP</name>
    <name type="ordered locus">MXAN_6514</name>
</gene>
<keyword id="KW-0046">Antibiotic resistance</keyword>
<keyword id="KW-0997">Cell inner membrane</keyword>
<keyword id="KW-1003">Cell membrane</keyword>
<keyword id="KW-0133">Cell shape</keyword>
<keyword id="KW-0961">Cell wall biogenesis/degradation</keyword>
<keyword id="KW-0378">Hydrolase</keyword>
<keyword id="KW-0472">Membrane</keyword>
<keyword id="KW-0573">Peptidoglycan synthesis</keyword>
<keyword id="KW-1185">Reference proteome</keyword>
<keyword id="KW-0812">Transmembrane</keyword>
<keyword id="KW-1133">Transmembrane helix</keyword>
<reference key="1">
    <citation type="journal article" date="2006" name="Proc. Natl. Acad. Sci. U.S.A.">
        <title>Evolution of sensory complexity recorded in a myxobacterial genome.</title>
        <authorList>
            <person name="Goldman B.S."/>
            <person name="Nierman W.C."/>
            <person name="Kaiser D."/>
            <person name="Slater S.C."/>
            <person name="Durkin A.S."/>
            <person name="Eisen J.A."/>
            <person name="Ronning C.M."/>
            <person name="Barbazuk W.B."/>
            <person name="Blanchard M."/>
            <person name="Field C."/>
            <person name="Halling C."/>
            <person name="Hinkle G."/>
            <person name="Iartchuk O."/>
            <person name="Kim H.S."/>
            <person name="Mackenzie C."/>
            <person name="Madupu R."/>
            <person name="Miller N."/>
            <person name="Shvartsbeyn A."/>
            <person name="Sullivan S.A."/>
            <person name="Vaudin M."/>
            <person name="Wiegand R."/>
            <person name="Kaplan H.B."/>
        </authorList>
    </citation>
    <scope>NUCLEOTIDE SEQUENCE [LARGE SCALE GENOMIC DNA]</scope>
    <source>
        <strain>DK1622</strain>
    </source>
</reference>
<proteinExistence type="inferred from homology"/>
<protein>
    <recommendedName>
        <fullName evidence="1">Undecaprenyl-diphosphatase</fullName>
        <ecNumber evidence="1">3.6.1.27</ecNumber>
    </recommendedName>
    <alternativeName>
        <fullName evidence="1">Bacitracin resistance protein</fullName>
    </alternativeName>
    <alternativeName>
        <fullName evidence="1">Undecaprenyl pyrophosphate phosphatase</fullName>
    </alternativeName>
</protein>
<evidence type="ECO:0000255" key="1">
    <source>
        <dbReference type="HAMAP-Rule" id="MF_01006"/>
    </source>
</evidence>
<sequence>MSLLEAIVLGLVQGLTEFLPISSTAHLRIAPELFGWRDPGAAYSAVIQLGTVAAVLIYFRKDIVSLVAAFFRGLARREPFGTLEARLAWFVLVGTLPVGIAGLTLKKFIENEFRSLYVISGSLIVLALILLVVEKRASHQRTLADMRWKDGILIGMWQALALIPGASRSGTTLTGGLSLGLKREDAARYSFLLSIPATTLAGVFELKHLLEAETRPSAMALWVGTLVAFASGMAAIAWLLRFLRTRTTLVFVVYRVALGVLLLVLLQTGKLSPMSGVENVEVPGEPGAPPVEKQITD</sequence>
<comment type="function">
    <text evidence="1">Catalyzes the dephosphorylation of undecaprenyl diphosphate (UPP). Confers resistance to bacitracin.</text>
</comment>
<comment type="catalytic activity">
    <reaction evidence="1">
        <text>di-trans,octa-cis-undecaprenyl diphosphate + H2O = di-trans,octa-cis-undecaprenyl phosphate + phosphate + H(+)</text>
        <dbReference type="Rhea" id="RHEA:28094"/>
        <dbReference type="ChEBI" id="CHEBI:15377"/>
        <dbReference type="ChEBI" id="CHEBI:15378"/>
        <dbReference type="ChEBI" id="CHEBI:43474"/>
        <dbReference type="ChEBI" id="CHEBI:58405"/>
        <dbReference type="ChEBI" id="CHEBI:60392"/>
        <dbReference type="EC" id="3.6.1.27"/>
    </reaction>
</comment>
<comment type="subcellular location">
    <subcellularLocation>
        <location evidence="1">Cell inner membrane</location>
        <topology evidence="1">Multi-pass membrane protein</topology>
    </subcellularLocation>
</comment>
<comment type="miscellaneous">
    <text>Bacitracin is thought to be involved in the inhibition of peptidoglycan synthesis by sequestering undecaprenyl diphosphate, thereby reducing the pool of lipid carrier available.</text>
</comment>
<comment type="similarity">
    <text evidence="1">Belongs to the UppP family.</text>
</comment>
<feature type="chain" id="PRO_0000250246" description="Undecaprenyl-diphosphatase">
    <location>
        <begin position="1"/>
        <end position="297"/>
    </location>
</feature>
<feature type="transmembrane region" description="Helical" evidence="1">
    <location>
        <begin position="39"/>
        <end position="59"/>
    </location>
</feature>
<feature type="transmembrane region" description="Helical" evidence="1">
    <location>
        <begin position="85"/>
        <end position="105"/>
    </location>
</feature>
<feature type="transmembrane region" description="Helical" evidence="1">
    <location>
        <begin position="113"/>
        <end position="133"/>
    </location>
</feature>
<feature type="transmembrane region" description="Helical" evidence="1">
    <location>
        <begin position="151"/>
        <end position="171"/>
    </location>
</feature>
<feature type="transmembrane region" description="Helical" evidence="1">
    <location>
        <begin position="190"/>
        <end position="210"/>
    </location>
</feature>
<feature type="transmembrane region" description="Helical" evidence="1">
    <location>
        <begin position="220"/>
        <end position="240"/>
    </location>
</feature>
<feature type="transmembrane region" description="Helical" evidence="1">
    <location>
        <begin position="249"/>
        <end position="269"/>
    </location>
</feature>
<name>UPPP_MYXXD</name>
<accession>Q1CY86</accession>